<dbReference type="EC" id="4.2.1.11" evidence="1"/>
<dbReference type="EMBL" id="FM209186">
    <property type="protein sequence ID" value="CAW26128.1"/>
    <property type="molecule type" value="Genomic_DNA"/>
</dbReference>
<dbReference type="RefSeq" id="WP_003092364.1">
    <property type="nucleotide sequence ID" value="NC_011770.1"/>
</dbReference>
<dbReference type="SMR" id="B7V7V4"/>
<dbReference type="KEGG" id="pag:PLES_14001"/>
<dbReference type="HOGENOM" id="CLU_031223_2_1_6"/>
<dbReference type="UniPathway" id="UPA00109">
    <property type="reaction ID" value="UER00187"/>
</dbReference>
<dbReference type="GO" id="GO:0009986">
    <property type="term" value="C:cell surface"/>
    <property type="evidence" value="ECO:0007669"/>
    <property type="project" value="UniProtKB-SubCell"/>
</dbReference>
<dbReference type="GO" id="GO:0005576">
    <property type="term" value="C:extracellular region"/>
    <property type="evidence" value="ECO:0007669"/>
    <property type="project" value="UniProtKB-SubCell"/>
</dbReference>
<dbReference type="GO" id="GO:0000015">
    <property type="term" value="C:phosphopyruvate hydratase complex"/>
    <property type="evidence" value="ECO:0007669"/>
    <property type="project" value="InterPro"/>
</dbReference>
<dbReference type="GO" id="GO:0000287">
    <property type="term" value="F:magnesium ion binding"/>
    <property type="evidence" value="ECO:0007669"/>
    <property type="project" value="UniProtKB-UniRule"/>
</dbReference>
<dbReference type="GO" id="GO:0004634">
    <property type="term" value="F:phosphopyruvate hydratase activity"/>
    <property type="evidence" value="ECO:0007669"/>
    <property type="project" value="UniProtKB-UniRule"/>
</dbReference>
<dbReference type="GO" id="GO:0006096">
    <property type="term" value="P:glycolytic process"/>
    <property type="evidence" value="ECO:0007669"/>
    <property type="project" value="UniProtKB-UniRule"/>
</dbReference>
<dbReference type="CDD" id="cd03313">
    <property type="entry name" value="enolase"/>
    <property type="match status" value="1"/>
</dbReference>
<dbReference type="FunFam" id="3.20.20.120:FF:000001">
    <property type="entry name" value="Enolase"/>
    <property type="match status" value="1"/>
</dbReference>
<dbReference type="FunFam" id="3.30.390.10:FF:000001">
    <property type="entry name" value="Enolase"/>
    <property type="match status" value="1"/>
</dbReference>
<dbReference type="Gene3D" id="3.20.20.120">
    <property type="entry name" value="Enolase-like C-terminal domain"/>
    <property type="match status" value="1"/>
</dbReference>
<dbReference type="Gene3D" id="3.30.390.10">
    <property type="entry name" value="Enolase-like, N-terminal domain"/>
    <property type="match status" value="1"/>
</dbReference>
<dbReference type="HAMAP" id="MF_00318">
    <property type="entry name" value="Enolase"/>
    <property type="match status" value="1"/>
</dbReference>
<dbReference type="InterPro" id="IPR000941">
    <property type="entry name" value="Enolase"/>
</dbReference>
<dbReference type="InterPro" id="IPR036849">
    <property type="entry name" value="Enolase-like_C_sf"/>
</dbReference>
<dbReference type="InterPro" id="IPR029017">
    <property type="entry name" value="Enolase-like_N"/>
</dbReference>
<dbReference type="InterPro" id="IPR020810">
    <property type="entry name" value="Enolase_C"/>
</dbReference>
<dbReference type="InterPro" id="IPR020809">
    <property type="entry name" value="Enolase_CS"/>
</dbReference>
<dbReference type="InterPro" id="IPR020811">
    <property type="entry name" value="Enolase_N"/>
</dbReference>
<dbReference type="NCBIfam" id="TIGR01060">
    <property type="entry name" value="eno"/>
    <property type="match status" value="1"/>
</dbReference>
<dbReference type="PANTHER" id="PTHR11902">
    <property type="entry name" value="ENOLASE"/>
    <property type="match status" value="1"/>
</dbReference>
<dbReference type="PANTHER" id="PTHR11902:SF1">
    <property type="entry name" value="ENOLASE"/>
    <property type="match status" value="1"/>
</dbReference>
<dbReference type="Pfam" id="PF00113">
    <property type="entry name" value="Enolase_C"/>
    <property type="match status" value="1"/>
</dbReference>
<dbReference type="Pfam" id="PF03952">
    <property type="entry name" value="Enolase_N"/>
    <property type="match status" value="1"/>
</dbReference>
<dbReference type="PIRSF" id="PIRSF001400">
    <property type="entry name" value="Enolase"/>
    <property type="match status" value="1"/>
</dbReference>
<dbReference type="PRINTS" id="PR00148">
    <property type="entry name" value="ENOLASE"/>
</dbReference>
<dbReference type="SFLD" id="SFLDS00001">
    <property type="entry name" value="Enolase"/>
    <property type="match status" value="1"/>
</dbReference>
<dbReference type="SFLD" id="SFLDF00002">
    <property type="entry name" value="enolase"/>
    <property type="match status" value="1"/>
</dbReference>
<dbReference type="SMART" id="SM01192">
    <property type="entry name" value="Enolase_C"/>
    <property type="match status" value="1"/>
</dbReference>
<dbReference type="SMART" id="SM01193">
    <property type="entry name" value="Enolase_N"/>
    <property type="match status" value="1"/>
</dbReference>
<dbReference type="SUPFAM" id="SSF51604">
    <property type="entry name" value="Enolase C-terminal domain-like"/>
    <property type="match status" value="1"/>
</dbReference>
<dbReference type="SUPFAM" id="SSF54826">
    <property type="entry name" value="Enolase N-terminal domain-like"/>
    <property type="match status" value="1"/>
</dbReference>
<dbReference type="PROSITE" id="PS00164">
    <property type="entry name" value="ENOLASE"/>
    <property type="match status" value="1"/>
</dbReference>
<feature type="chain" id="PRO_1000119579" description="Enolase">
    <location>
        <begin position="1"/>
        <end position="429"/>
    </location>
</feature>
<feature type="active site" description="Proton donor" evidence="1">
    <location>
        <position position="209"/>
    </location>
</feature>
<feature type="active site" description="Proton acceptor" evidence="1">
    <location>
        <position position="341"/>
    </location>
</feature>
<feature type="binding site" evidence="1">
    <location>
        <position position="167"/>
    </location>
    <ligand>
        <name>(2R)-2-phosphoglycerate</name>
        <dbReference type="ChEBI" id="CHEBI:58289"/>
    </ligand>
</feature>
<feature type="binding site" evidence="1">
    <location>
        <position position="246"/>
    </location>
    <ligand>
        <name>Mg(2+)</name>
        <dbReference type="ChEBI" id="CHEBI:18420"/>
    </ligand>
</feature>
<feature type="binding site" evidence="1">
    <location>
        <position position="289"/>
    </location>
    <ligand>
        <name>Mg(2+)</name>
        <dbReference type="ChEBI" id="CHEBI:18420"/>
    </ligand>
</feature>
<feature type="binding site" evidence="1">
    <location>
        <position position="316"/>
    </location>
    <ligand>
        <name>Mg(2+)</name>
        <dbReference type="ChEBI" id="CHEBI:18420"/>
    </ligand>
</feature>
<feature type="binding site" evidence="1">
    <location>
        <position position="341"/>
    </location>
    <ligand>
        <name>(2R)-2-phosphoglycerate</name>
        <dbReference type="ChEBI" id="CHEBI:58289"/>
    </ligand>
</feature>
<feature type="binding site" evidence="1">
    <location>
        <position position="370"/>
    </location>
    <ligand>
        <name>(2R)-2-phosphoglycerate</name>
        <dbReference type="ChEBI" id="CHEBI:58289"/>
    </ligand>
</feature>
<feature type="binding site" evidence="1">
    <location>
        <position position="371"/>
    </location>
    <ligand>
        <name>(2R)-2-phosphoglycerate</name>
        <dbReference type="ChEBI" id="CHEBI:58289"/>
    </ligand>
</feature>
<feature type="binding site" evidence="1">
    <location>
        <position position="392"/>
    </location>
    <ligand>
        <name>(2R)-2-phosphoglycerate</name>
        <dbReference type="ChEBI" id="CHEBI:58289"/>
    </ligand>
</feature>
<organism>
    <name type="scientific">Pseudomonas aeruginosa (strain LESB58)</name>
    <dbReference type="NCBI Taxonomy" id="557722"/>
    <lineage>
        <taxon>Bacteria</taxon>
        <taxon>Pseudomonadati</taxon>
        <taxon>Pseudomonadota</taxon>
        <taxon>Gammaproteobacteria</taxon>
        <taxon>Pseudomonadales</taxon>
        <taxon>Pseudomonadaceae</taxon>
        <taxon>Pseudomonas</taxon>
    </lineage>
</organism>
<name>ENO_PSEA8</name>
<gene>
    <name evidence="1" type="primary">eno</name>
    <name type="ordered locus">PLES_14001</name>
</gene>
<keyword id="KW-0963">Cytoplasm</keyword>
<keyword id="KW-0324">Glycolysis</keyword>
<keyword id="KW-0456">Lyase</keyword>
<keyword id="KW-0460">Magnesium</keyword>
<keyword id="KW-0479">Metal-binding</keyword>
<keyword id="KW-0964">Secreted</keyword>
<accession>B7V7V4</accession>
<proteinExistence type="inferred from homology"/>
<protein>
    <recommendedName>
        <fullName evidence="1">Enolase</fullName>
        <ecNumber evidence="1">4.2.1.11</ecNumber>
    </recommendedName>
    <alternativeName>
        <fullName evidence="1">2-phospho-D-glycerate hydro-lyase</fullName>
    </alternativeName>
    <alternativeName>
        <fullName evidence="1">2-phosphoglycerate dehydratase</fullName>
    </alternativeName>
</protein>
<evidence type="ECO:0000255" key="1">
    <source>
        <dbReference type="HAMAP-Rule" id="MF_00318"/>
    </source>
</evidence>
<reference key="1">
    <citation type="journal article" date="2009" name="Genome Res.">
        <title>Newly introduced genomic prophage islands are critical determinants of in vivo competitiveness in the Liverpool epidemic strain of Pseudomonas aeruginosa.</title>
        <authorList>
            <person name="Winstanley C."/>
            <person name="Langille M.G.I."/>
            <person name="Fothergill J.L."/>
            <person name="Kukavica-Ibrulj I."/>
            <person name="Paradis-Bleau C."/>
            <person name="Sanschagrin F."/>
            <person name="Thomson N.R."/>
            <person name="Winsor G.L."/>
            <person name="Quail M.A."/>
            <person name="Lennard N."/>
            <person name="Bignell A."/>
            <person name="Clarke L."/>
            <person name="Seeger K."/>
            <person name="Saunders D."/>
            <person name="Harris D."/>
            <person name="Parkhill J."/>
            <person name="Hancock R.E.W."/>
            <person name="Brinkman F.S.L."/>
            <person name="Levesque R.C."/>
        </authorList>
    </citation>
    <scope>NUCLEOTIDE SEQUENCE [LARGE SCALE GENOMIC DNA]</scope>
    <source>
        <strain>LESB58</strain>
    </source>
</reference>
<sequence>MAKIVDIKGREVLDSRGNPTVEADVILDNGIVGSACAPSGASTGSREALELRDGDKSRYLGKGVLKAVANINGPIRDLLLGKDAADQKALDHAMIELDGTENKAKLGANAILAVSLAAAKAAAQAKGVPLYAHIADLNGTPGQYSMPVPMMNIINGGEHADNNVDIQEFMVQPVGAKNFAEALRMGAEIFHHLKAVLKARGLNTAVGDEGGFAPNLSSNEDALAAIAEAVEKAGYKLGDDVTLALDCASSEFFKDGKYDLEGEGKVFDAAGFADYLAGLTQRYPIISIEDGMDESDWAGWKGLTDKIGAKVQLVGDDLFVTNTKILKEGIEKGIGNSILIKFNQIGSLTETLEAIQMAKAAGYTAVISHRSGETEDSTIADLAVGTAAGQIKTGSLCRSDRVSKYNQLLRIEEQLGAKAPYRGRAEFRG</sequence>
<comment type="function">
    <text evidence="1">Catalyzes the reversible conversion of 2-phosphoglycerate (2-PG) into phosphoenolpyruvate (PEP). It is essential for the degradation of carbohydrates via glycolysis.</text>
</comment>
<comment type="catalytic activity">
    <reaction evidence="1">
        <text>(2R)-2-phosphoglycerate = phosphoenolpyruvate + H2O</text>
        <dbReference type="Rhea" id="RHEA:10164"/>
        <dbReference type="ChEBI" id="CHEBI:15377"/>
        <dbReference type="ChEBI" id="CHEBI:58289"/>
        <dbReference type="ChEBI" id="CHEBI:58702"/>
        <dbReference type="EC" id="4.2.1.11"/>
    </reaction>
</comment>
<comment type="cofactor">
    <cofactor evidence="1">
        <name>Mg(2+)</name>
        <dbReference type="ChEBI" id="CHEBI:18420"/>
    </cofactor>
    <text evidence="1">Binds a second Mg(2+) ion via substrate during catalysis.</text>
</comment>
<comment type="pathway">
    <text evidence="1">Carbohydrate degradation; glycolysis; pyruvate from D-glyceraldehyde 3-phosphate: step 4/5.</text>
</comment>
<comment type="subunit">
    <text evidence="1">Component of the RNA degradosome, a multiprotein complex involved in RNA processing and mRNA degradation.</text>
</comment>
<comment type="subcellular location">
    <subcellularLocation>
        <location evidence="1">Cytoplasm</location>
    </subcellularLocation>
    <subcellularLocation>
        <location evidence="1">Secreted</location>
    </subcellularLocation>
    <subcellularLocation>
        <location evidence="1">Cell surface</location>
    </subcellularLocation>
    <text evidence="1">Fractions of enolase are present in both the cytoplasm and on the cell surface.</text>
</comment>
<comment type="similarity">
    <text evidence="1">Belongs to the enolase family.</text>
</comment>